<keyword id="KW-0067">ATP-binding</keyword>
<keyword id="KW-0149">Chlorophyll biosynthesis</keyword>
<keyword id="KW-0150">Chloroplast</keyword>
<keyword id="KW-1015">Disulfide bond</keyword>
<keyword id="KW-0436">Ligase</keyword>
<keyword id="KW-0547">Nucleotide-binding</keyword>
<keyword id="KW-0602">Photosynthesis</keyword>
<keyword id="KW-0934">Plastid</keyword>
<reference key="1">
    <citation type="journal article" date="1997" name="Proc. Natl. Acad. Sci. U.S.A.">
        <title>Complete nucleotide sequence of the chloroplast genome from the green alga Chlorella vulgaris: the existence of genes possibly involved in chloroplast division.</title>
        <authorList>
            <person name="Wakasugi T."/>
            <person name="Nagai T."/>
            <person name="Kapoor M."/>
            <person name="Sugita M."/>
            <person name="Ito M."/>
            <person name="Ito S."/>
            <person name="Tsudzuki J."/>
            <person name="Nakashima K."/>
            <person name="Tsudzuki T."/>
            <person name="Suzuki Y."/>
            <person name="Hamada A."/>
            <person name="Ohta T."/>
            <person name="Inamura A."/>
            <person name="Yoshinaga K."/>
            <person name="Sugiura M."/>
        </authorList>
    </citation>
    <scope>NUCLEOTIDE SEQUENCE [LARGE SCALE GENOMIC DNA]</scope>
    <source>
        <strain>IAM C-27 / Tamiya</strain>
    </source>
</reference>
<evidence type="ECO:0000250" key="1"/>
<evidence type="ECO:0000255" key="2"/>
<evidence type="ECO:0000305" key="3"/>
<protein>
    <recommendedName>
        <fullName>Magnesium-chelatase subunit ChlI</fullName>
        <shortName>Mg-chelatase subunit I-1</shortName>
        <ecNumber>6.6.1.1</ecNumber>
    </recommendedName>
    <alternativeName>
        <fullName>Mg-protoporphyrin IX chelatase subunit ChlI</fullName>
    </alternativeName>
</protein>
<comment type="function">
    <text evidence="1">Involved in chlorophyll biosynthesis. Catalyzes the insertion of magnesium ion into protoporphyrin IX to yield Mg-protoporphyrin IX. The magnesium-chelatase is a complex of three subunits, CHLI, CHLD and CHLH. The reaction takes place in two steps, with an ATP-dependent activation followed by an ATP-dependent chelation step (By similarity).</text>
</comment>
<comment type="catalytic activity">
    <reaction>
        <text>protoporphyrin IX + Mg(2+) + ATP + H2O = Mg-protoporphyrin IX + ADP + phosphate + 3 H(+)</text>
        <dbReference type="Rhea" id="RHEA:13961"/>
        <dbReference type="ChEBI" id="CHEBI:15377"/>
        <dbReference type="ChEBI" id="CHEBI:15378"/>
        <dbReference type="ChEBI" id="CHEBI:18420"/>
        <dbReference type="ChEBI" id="CHEBI:30616"/>
        <dbReference type="ChEBI" id="CHEBI:43474"/>
        <dbReference type="ChEBI" id="CHEBI:57306"/>
        <dbReference type="ChEBI" id="CHEBI:60492"/>
        <dbReference type="ChEBI" id="CHEBI:456216"/>
        <dbReference type="EC" id="6.6.1.1"/>
    </reaction>
</comment>
<comment type="activity regulation">
    <text evidence="1">Redox regulation; active in reducing conditions, inactive in oxidizing conditions. Thioredoxins f and m mediate the reversible reductive activation of oxidized CHLI (By similarity).</text>
</comment>
<comment type="pathway">
    <text>Porphyrin-containing compound metabolism; chlorophyll biosynthesis.</text>
</comment>
<comment type="subunit">
    <text>The magnesium chelatase complex is a heterotrimer consisting of subunits CHLI, CHLD and CHLH.</text>
</comment>
<comment type="subcellular location">
    <subcellularLocation>
        <location evidence="3">Plastid</location>
        <location evidence="3">Chloroplast</location>
    </subcellularLocation>
</comment>
<comment type="similarity">
    <text evidence="3">Belongs to the Mg-chelatase subunits D/I family.</text>
</comment>
<dbReference type="EC" id="6.6.1.1"/>
<dbReference type="EMBL" id="AB001684">
    <property type="protein sequence ID" value="BAA57990.1"/>
    <property type="molecule type" value="Genomic_DNA"/>
</dbReference>
<dbReference type="PIR" id="T07342">
    <property type="entry name" value="T07342"/>
</dbReference>
<dbReference type="RefSeq" id="NP_045914.1">
    <property type="nucleotide sequence ID" value="NC_001865.1"/>
</dbReference>
<dbReference type="SMR" id="P56304"/>
<dbReference type="GeneID" id="809149"/>
<dbReference type="UniPathway" id="UPA00668"/>
<dbReference type="GO" id="GO:0009570">
    <property type="term" value="C:chloroplast stroma"/>
    <property type="evidence" value="ECO:0007669"/>
    <property type="project" value="TreeGrafter"/>
</dbReference>
<dbReference type="GO" id="GO:0005524">
    <property type="term" value="F:ATP binding"/>
    <property type="evidence" value="ECO:0007669"/>
    <property type="project" value="UniProtKB-KW"/>
</dbReference>
<dbReference type="GO" id="GO:0016887">
    <property type="term" value="F:ATP hydrolysis activity"/>
    <property type="evidence" value="ECO:0007669"/>
    <property type="project" value="InterPro"/>
</dbReference>
<dbReference type="GO" id="GO:0016851">
    <property type="term" value="F:magnesium chelatase activity"/>
    <property type="evidence" value="ECO:0007669"/>
    <property type="project" value="UniProtKB-EC"/>
</dbReference>
<dbReference type="GO" id="GO:0015995">
    <property type="term" value="P:chlorophyll biosynthetic process"/>
    <property type="evidence" value="ECO:0007669"/>
    <property type="project" value="UniProtKB-UniPathway"/>
</dbReference>
<dbReference type="GO" id="GO:0015979">
    <property type="term" value="P:photosynthesis"/>
    <property type="evidence" value="ECO:0007669"/>
    <property type="project" value="UniProtKB-KW"/>
</dbReference>
<dbReference type="CDD" id="cd00009">
    <property type="entry name" value="AAA"/>
    <property type="match status" value="1"/>
</dbReference>
<dbReference type="FunFam" id="1.10.8.80:FF:000001">
    <property type="entry name" value="Mg-protoporphyrin IX chelatase"/>
    <property type="match status" value="1"/>
</dbReference>
<dbReference type="FunFam" id="3.40.50.300:FF:000601">
    <property type="entry name" value="Mg-protoporphyrin IX chelatase"/>
    <property type="match status" value="1"/>
</dbReference>
<dbReference type="Gene3D" id="1.10.8.80">
    <property type="entry name" value="Magnesium chelatase subunit I, C-Terminal domain"/>
    <property type="match status" value="1"/>
</dbReference>
<dbReference type="Gene3D" id="3.40.50.300">
    <property type="entry name" value="P-loop containing nucleotide triphosphate hydrolases"/>
    <property type="match status" value="1"/>
</dbReference>
<dbReference type="InterPro" id="IPR003593">
    <property type="entry name" value="AAA+_ATPase"/>
</dbReference>
<dbReference type="InterPro" id="IPR045006">
    <property type="entry name" value="CHLI-like"/>
</dbReference>
<dbReference type="InterPro" id="IPR041628">
    <property type="entry name" value="ChlI/MoxR_AAA_lid"/>
</dbReference>
<dbReference type="InterPro" id="IPR011775">
    <property type="entry name" value="Mg_chelatase_ATPase-isu"/>
</dbReference>
<dbReference type="InterPro" id="IPR000523">
    <property type="entry name" value="Mg_chelatse_chII-like_cat_dom"/>
</dbReference>
<dbReference type="InterPro" id="IPR027417">
    <property type="entry name" value="P-loop_NTPase"/>
</dbReference>
<dbReference type="NCBIfam" id="TIGR02030">
    <property type="entry name" value="BchI-ChlI"/>
    <property type="match status" value="1"/>
</dbReference>
<dbReference type="PANTHER" id="PTHR32039">
    <property type="entry name" value="MAGNESIUM-CHELATASE SUBUNIT CHLI"/>
    <property type="match status" value="1"/>
</dbReference>
<dbReference type="PANTHER" id="PTHR32039:SF9">
    <property type="entry name" value="MAGNESIUM-CHELATASE SUBUNIT CHLI-2, CHLOROPLASTIC"/>
    <property type="match status" value="1"/>
</dbReference>
<dbReference type="Pfam" id="PF17863">
    <property type="entry name" value="AAA_lid_2"/>
    <property type="match status" value="1"/>
</dbReference>
<dbReference type="Pfam" id="PF01078">
    <property type="entry name" value="Mg_chelatase"/>
    <property type="match status" value="1"/>
</dbReference>
<dbReference type="SMART" id="SM00382">
    <property type="entry name" value="AAA"/>
    <property type="match status" value="1"/>
</dbReference>
<dbReference type="SUPFAM" id="SSF52540">
    <property type="entry name" value="P-loop containing nucleoside triphosphate hydrolases"/>
    <property type="match status" value="1"/>
</dbReference>
<organism>
    <name type="scientific">Chlorella vulgaris</name>
    <name type="common">Green alga</name>
    <dbReference type="NCBI Taxonomy" id="3077"/>
    <lineage>
        <taxon>Eukaryota</taxon>
        <taxon>Viridiplantae</taxon>
        <taxon>Chlorophyta</taxon>
        <taxon>core chlorophytes</taxon>
        <taxon>Trebouxiophyceae</taxon>
        <taxon>Chlorellales</taxon>
        <taxon>Chlorellaceae</taxon>
        <taxon>Chlorella clade</taxon>
        <taxon>Chlorella</taxon>
    </lineage>
</organism>
<sequence length="354" mass="39425">MNTVVENSLEQARPVFPFTAIVGQEEMKLALILNVIDPKIGGVMIMGDRGTGKSTTVRALVDLLPEIQVVADDPFNSDPKDPELMSQEVRGRLQRKETVPITTKKISMVDLPLGATEDRVCGTIDIEKALTEGVKAFEPGLLAKANRGILYVDEVNLLDDHLVDVLLDSAASGWNTVEREGISISHPARFILVGSGNPEEGELRPQLLDRFGMHAQIGTVKEPNLRVQIVEQRANFDAAPLEFRETYQDSQAQLGNQILEARNLLPQIQLEYDYRVKISQICSELDVDGLRGDLVTNRASKAIASFEGRTEVTPEDIFRVIPLCLRHRLRKDPLESIDSGDKVRDIFKRVFGYE</sequence>
<geneLocation type="chloroplast"/>
<gene>
    <name type="primary">chlI</name>
</gene>
<proteinExistence type="inferred from homology"/>
<accession>P56304</accession>
<name>CHLI_CHLVU</name>
<feature type="chain" id="PRO_0000206864" description="Magnesium-chelatase subunit ChlI">
    <location>
        <begin position="1"/>
        <end position="354"/>
    </location>
</feature>
<feature type="binding site" evidence="2">
    <location>
        <begin position="47"/>
        <end position="54"/>
    </location>
    <ligand>
        <name>ATP</name>
        <dbReference type="ChEBI" id="CHEBI:30616"/>
    </ligand>
</feature>
<feature type="disulfide bond" description="Inhibitory under oxidizing conditions" evidence="1">
    <location>
        <begin position="282"/>
        <end position="324"/>
    </location>
</feature>